<comment type="function">
    <text evidence="2 5 6 7">Thrombin-like snake venom serine protease. Displays a specificity similar to trypsin. Releases only fibrinopeptide A in the conversion of fibrinogen to fibrin. Reversibly increases the permeability of the blood brain barrier (BBB) in mice (PubMed:11137545, PubMed:20637222). Induces the barrel rotation syndrome in mice, which is manifested by gyroxin-like, rapid rolling motions (PubMed:11137545, PubMed:20637222). This syndrome may be due to its effect on BBB permeability, and certainly also to other actions affecting endogenous substrates present in the endothelium, nervous tissues or blood (PubMed:11137545, PubMed:20637222). Also shows a moderate inhibitory activity on the human voltage-gated potassium channel Kv10.1/KCNH1/EAG1 (58% current inhibition at 5 uM) (PubMed:32161292). It blocks Kv10.1/KCNH1/EAG1 in a time and dose-dependent manner and with a mechanism independent of its enzymatic activity (By similarity). It may have a preference in interacting with Kv10.1/KCNH1/EAG1 in its closed state, since the inhibitory effect of the toxin is decreased at more depolarized potentials (By similarity).</text>
</comment>
<comment type="subunit">
    <text evidence="1">Monomer.</text>
</comment>
<comment type="subcellular location">
    <subcellularLocation>
        <location>Secreted</location>
    </subcellularLocation>
</comment>
<comment type="tissue specificity">
    <text>Expressed by the venom gland.</text>
</comment>
<comment type="miscellaneous">
    <text evidence="9">Negative results: does not have phospholipase activity, does not aggregate platelet, and does not affect the release of the neurotransmitters dopamine and acetylcholine in the nervous system.</text>
</comment>
<comment type="similarity">
    <text evidence="4">Belongs to the peptidase S1 family. Snake venom subfamily.</text>
</comment>
<comment type="caution">
    <text evidence="8">Information taken from PubMed:20637222 and PubMed:11137545 are not linked to a specific sequence. Hence, it is not sure whether the function corresponds to this protein or to a paralog.</text>
</comment>
<feature type="signal peptide" evidence="3">
    <location>
        <begin position="1"/>
        <end position="18"/>
    </location>
</feature>
<feature type="propeptide" id="PRO_5000301404" evidence="1">
    <location>
        <begin position="19"/>
        <end position="262"/>
    </location>
</feature>
<feature type="chain" id="PRO_5000301405" description="Thrombin-like enzyme gyroxin B1.3">
    <location>
        <begin position="25"/>
        <end position="262"/>
    </location>
</feature>
<feature type="domain" description="Peptidase S1" evidence="4">
    <location>
        <begin position="25"/>
        <end position="253"/>
    </location>
</feature>
<feature type="active site" description="Charge relay system" evidence="1">
    <location>
        <position position="67"/>
    </location>
</feature>
<feature type="active site" description="Charge relay system" evidence="1">
    <location>
        <position position="112"/>
    </location>
</feature>
<feature type="active site" description="Charge relay system" evidence="1">
    <location>
        <position position="208"/>
    </location>
</feature>
<feature type="glycosylation site" description="N-linked (GlcNAc...) asparagine" evidence="3">
    <location>
        <position position="105"/>
    </location>
</feature>
<feature type="disulfide bond" evidence="4">
    <location>
        <begin position="31"/>
        <end position="165"/>
    </location>
</feature>
<feature type="disulfide bond" evidence="4">
    <location>
        <begin position="52"/>
        <end position="68"/>
    </location>
</feature>
<feature type="disulfide bond" evidence="4">
    <location>
        <begin position="102"/>
        <end position="260"/>
    </location>
</feature>
<feature type="disulfide bond" evidence="4">
    <location>
        <begin position="144"/>
        <end position="214"/>
    </location>
</feature>
<feature type="disulfide bond" evidence="4">
    <location>
        <begin position="176"/>
        <end position="193"/>
    </location>
</feature>
<feature type="disulfide bond" evidence="4">
    <location>
        <begin position="204"/>
        <end position="229"/>
    </location>
</feature>
<reference key="1">
    <citation type="journal article" date="2009" name="Toxicon">
        <title>Cloning of serine protease cDNAs from Crotalus durissus terrificus venom gland and expression of a functional Gyroxin homologue in COS-7 cells.</title>
        <authorList>
            <person name="Yonamine C.M."/>
            <person name="Prieto-da-Silva A.R."/>
            <person name="Magalhaes G.S."/>
            <person name="Radis-Baptista G."/>
            <person name="Morganti L."/>
            <person name="Ambiel F.C."/>
            <person name="Chura-Chambi R.M."/>
            <person name="Yamane T."/>
            <person name="Camillo M.A."/>
        </authorList>
    </citation>
    <scope>NUCLEOTIDE SEQUENCE [MRNA]</scope>
    <source>
        <tissue>Venom gland</tissue>
    </source>
</reference>
<reference key="2">
    <citation type="journal article" date="2001" name="Toxicon">
        <title>Gyroxin fails to modify in vitro release of labelled dopamine and acetylcholine from rat and mouse striatal tissue.</title>
        <authorList>
            <person name="Camillo M.A."/>
            <person name="Arruda Paes P.C."/>
            <person name="Troncone L.R."/>
            <person name="Rogero J.R."/>
        </authorList>
    </citation>
    <scope>FUNCTION</scope>
</reference>
<reference key="3">
    <citation type="journal article" date="2011" name="Toxicon">
        <title>Gyroxin increases blood-brain barrier permeability to Evans blue dye in mice.</title>
        <authorList>
            <person name="Alves da Silva J.A."/>
            <person name="Oliveira K.C."/>
            <person name="Camillo M.A."/>
        </authorList>
    </citation>
    <scope>FUNCTION</scope>
</reference>
<reference key="4">
    <citation type="journal article" date="2020" name="Sci. Rep.">
        <title>Beyond hemostasis: a snake venom serine protease with potassium channel blocking and potential antitumor activities.</title>
        <authorList>
            <person name="Boldrini-Franca J."/>
            <person name="Pinheiro-Junior E.L."/>
            <person name="Peigneur S."/>
            <person name="Pucca M.B."/>
            <person name="Cerni F.A."/>
            <person name="Borges R.J."/>
            <person name="Costa T.R."/>
            <person name="Carone S.E.I."/>
            <person name="Fontes M.R.M."/>
            <person name="Sampaio S.V."/>
            <person name="Arantes E.C."/>
            <person name="Tytgat J."/>
        </authorList>
    </citation>
    <scope>FUNCTION</scope>
</reference>
<proteinExistence type="evidence at transcript level"/>
<organism>
    <name type="scientific">Crotalus durissus terrificus</name>
    <name type="common">South American rattlesnake</name>
    <dbReference type="NCBI Taxonomy" id="8732"/>
    <lineage>
        <taxon>Eukaryota</taxon>
        <taxon>Metazoa</taxon>
        <taxon>Chordata</taxon>
        <taxon>Craniata</taxon>
        <taxon>Vertebrata</taxon>
        <taxon>Euteleostomi</taxon>
        <taxon>Lepidosauria</taxon>
        <taxon>Squamata</taxon>
        <taxon>Bifurcata</taxon>
        <taxon>Unidentata</taxon>
        <taxon>Episquamata</taxon>
        <taxon>Toxicofera</taxon>
        <taxon>Serpentes</taxon>
        <taxon>Colubroidea</taxon>
        <taxon>Viperidae</taxon>
        <taxon>Crotalinae</taxon>
        <taxon>Crotalus</taxon>
    </lineage>
</organism>
<sequence>MVLIRVLANLLILQLSYAQKSSELVIGGDECNINEHNFLVALYEYWSQSFLCGGTLINGEWVLTAAHCDRKHILIYVGVHDRSVQFDKEQRRFPKEKYFFNCRNNFTKWDKDIMLIRLNKPVSYSEHIAPLSLPSSPPIVGSVCRVMGWGTIKSPQETLPDVPHCANINLLDYEVCRTAHPQFRLPATSRILCAGVLEGGIDTCHRDSGGPLICNGEFQGIVSWGDGPCAQPDKPALYSKVFDHLDWIQNIIAGSETVNCPS</sequence>
<keyword id="KW-1204">Blood coagulation cascade activating toxin</keyword>
<keyword id="KW-1015">Disulfide bond</keyword>
<keyword id="KW-0325">Glycoprotein</keyword>
<keyword id="KW-1199">Hemostasis impairing toxin</keyword>
<keyword id="KW-0378">Hydrolase</keyword>
<keyword id="KW-0872">Ion channel impairing toxin</keyword>
<keyword id="KW-0632">Potassium channel impairing toxin</keyword>
<keyword id="KW-0645">Protease</keyword>
<keyword id="KW-0964">Secreted</keyword>
<keyword id="KW-0720">Serine protease</keyword>
<keyword id="KW-0732">Signal</keyword>
<keyword id="KW-0800">Toxin</keyword>
<keyword id="KW-1220">Voltage-gated potassium channel impairing toxin</keyword>
<accession>B0FXM1</accession>
<name>VSP13_CRODU</name>
<evidence type="ECO:0000250" key="1"/>
<evidence type="ECO:0000250" key="2">
    <source>
        <dbReference type="UniProtKB" id="A0A0S4FKT4"/>
    </source>
</evidence>
<evidence type="ECO:0000255" key="3"/>
<evidence type="ECO:0000255" key="4">
    <source>
        <dbReference type="PROSITE-ProRule" id="PRU00274"/>
    </source>
</evidence>
<evidence type="ECO:0000269" key="5">
    <source>
    </source>
</evidence>
<evidence type="ECO:0000269" key="6">
    <source>
    </source>
</evidence>
<evidence type="ECO:0000269" key="7">
    <source>
    </source>
</evidence>
<evidence type="ECO:0000305" key="8"/>
<evidence type="ECO:0000305" key="9">
    <source>
    </source>
</evidence>
<protein>
    <recommendedName>
        <fullName>Thrombin-like enzyme gyroxin B1.3</fullName>
        <shortName>SVTLE gyroxin B1.3</shortName>
        <ecNumber>3.4.21.-</ecNumber>
    </recommendedName>
    <alternativeName>
        <fullName>Fibrinogen-clotting enzyme</fullName>
    </alternativeName>
    <alternativeName>
        <fullName>Snake venom serine protease</fullName>
        <shortName>SVSP</shortName>
    </alternativeName>
</protein>
<dbReference type="EC" id="3.4.21.-"/>
<dbReference type="EMBL" id="EU360951">
    <property type="protein sequence ID" value="ABY65929.1"/>
    <property type="molecule type" value="mRNA"/>
</dbReference>
<dbReference type="SMR" id="B0FXM1"/>
<dbReference type="MEROPS" id="S01.181"/>
<dbReference type="TCDB" id="8.A.131.1.16">
    <property type="family name" value="the transmembrane protease serine 3 (tmprss3) family"/>
</dbReference>
<dbReference type="GO" id="GO:0005576">
    <property type="term" value="C:extracellular region"/>
    <property type="evidence" value="ECO:0007669"/>
    <property type="project" value="UniProtKB-SubCell"/>
</dbReference>
<dbReference type="GO" id="GO:0030141">
    <property type="term" value="C:secretory granule"/>
    <property type="evidence" value="ECO:0007669"/>
    <property type="project" value="TreeGrafter"/>
</dbReference>
<dbReference type="GO" id="GO:0015459">
    <property type="term" value="F:potassium channel regulator activity"/>
    <property type="evidence" value="ECO:0007669"/>
    <property type="project" value="UniProtKB-KW"/>
</dbReference>
<dbReference type="GO" id="GO:0004252">
    <property type="term" value="F:serine-type endopeptidase activity"/>
    <property type="evidence" value="ECO:0007669"/>
    <property type="project" value="InterPro"/>
</dbReference>
<dbReference type="GO" id="GO:0090729">
    <property type="term" value="F:toxin activity"/>
    <property type="evidence" value="ECO:0007669"/>
    <property type="project" value="UniProtKB-KW"/>
</dbReference>
<dbReference type="GO" id="GO:0006508">
    <property type="term" value="P:proteolysis"/>
    <property type="evidence" value="ECO:0007669"/>
    <property type="project" value="UniProtKB-KW"/>
</dbReference>
<dbReference type="CDD" id="cd00190">
    <property type="entry name" value="Tryp_SPc"/>
    <property type="match status" value="1"/>
</dbReference>
<dbReference type="FunFam" id="2.40.10.10:FF:000158">
    <property type="entry name" value="Thrombin-like enzyme saxthrombin"/>
    <property type="match status" value="1"/>
</dbReference>
<dbReference type="Gene3D" id="2.40.10.10">
    <property type="entry name" value="Trypsin-like serine proteases"/>
    <property type="match status" value="2"/>
</dbReference>
<dbReference type="InterPro" id="IPR009003">
    <property type="entry name" value="Peptidase_S1_PA"/>
</dbReference>
<dbReference type="InterPro" id="IPR043504">
    <property type="entry name" value="Peptidase_S1_PA_chymotrypsin"/>
</dbReference>
<dbReference type="InterPro" id="IPR001314">
    <property type="entry name" value="Peptidase_S1A"/>
</dbReference>
<dbReference type="InterPro" id="IPR001254">
    <property type="entry name" value="Trypsin_dom"/>
</dbReference>
<dbReference type="InterPro" id="IPR018114">
    <property type="entry name" value="TRYPSIN_HIS"/>
</dbReference>
<dbReference type="PANTHER" id="PTHR24271:SF47">
    <property type="entry name" value="KALLIKREIN-1"/>
    <property type="match status" value="1"/>
</dbReference>
<dbReference type="PANTHER" id="PTHR24271">
    <property type="entry name" value="KALLIKREIN-RELATED"/>
    <property type="match status" value="1"/>
</dbReference>
<dbReference type="Pfam" id="PF00089">
    <property type="entry name" value="Trypsin"/>
    <property type="match status" value="1"/>
</dbReference>
<dbReference type="PRINTS" id="PR00722">
    <property type="entry name" value="CHYMOTRYPSIN"/>
</dbReference>
<dbReference type="SMART" id="SM00020">
    <property type="entry name" value="Tryp_SPc"/>
    <property type="match status" value="1"/>
</dbReference>
<dbReference type="SUPFAM" id="SSF50494">
    <property type="entry name" value="Trypsin-like serine proteases"/>
    <property type="match status" value="1"/>
</dbReference>
<dbReference type="PROSITE" id="PS50240">
    <property type="entry name" value="TRYPSIN_DOM"/>
    <property type="match status" value="1"/>
</dbReference>
<dbReference type="PROSITE" id="PS00134">
    <property type="entry name" value="TRYPSIN_HIS"/>
    <property type="match status" value="1"/>
</dbReference>